<name>SLEL_BACAN</name>
<evidence type="ECO:0000250" key="1">
    <source>
        <dbReference type="UniProtKB" id="P37531"/>
    </source>
</evidence>
<evidence type="ECO:0000255" key="2">
    <source>
        <dbReference type="PROSITE-ProRule" id="PRU01118"/>
    </source>
</evidence>
<evidence type="ECO:0000255" key="3">
    <source>
        <dbReference type="PROSITE-ProRule" id="PRU01258"/>
    </source>
</evidence>
<evidence type="ECO:0000269" key="4">
    <source>
    </source>
</evidence>
<evidence type="ECO:0000269" key="5">
    <source>
    </source>
</evidence>
<evidence type="ECO:0000303" key="6">
    <source>
    </source>
</evidence>
<evidence type="ECO:0000305" key="7"/>
<evidence type="ECO:0000312" key="8">
    <source>
        <dbReference type="EMBL" id="AAT55709.1"/>
    </source>
</evidence>
<protein>
    <recommendedName>
        <fullName evidence="6">Cortical fragment-lytic enzyme</fullName>
        <shortName evidence="6">CFLE</shortName>
        <ecNumber evidence="4 5">3.2.1.-</ecNumber>
    </recommendedName>
    <alternativeName>
        <fullName evidence="1">Spore peptidoglycan N-acetylglucosaminidase</fullName>
    </alternativeName>
</protein>
<reference key="1">
    <citation type="submission" date="2004-01" db="EMBL/GenBank/DDBJ databases">
        <title>Complete genome sequence of Bacillus anthracis Sterne.</title>
        <authorList>
            <person name="Brettin T.S."/>
            <person name="Bruce D."/>
            <person name="Challacombe J.F."/>
            <person name="Gilna P."/>
            <person name="Han C."/>
            <person name="Hill K."/>
            <person name="Hitchcock P."/>
            <person name="Jackson P."/>
            <person name="Keim P."/>
            <person name="Longmire J."/>
            <person name="Lucas S."/>
            <person name="Okinaka R."/>
            <person name="Richardson P."/>
            <person name="Rubin E."/>
            <person name="Tice H."/>
        </authorList>
    </citation>
    <scope>NUCLEOTIDE SEQUENCE [LARGE SCALE GENOMIC DNA]</scope>
    <source>
        <strain>Sterne</strain>
    </source>
</reference>
<reference key="2">
    <citation type="journal article" date="2008" name="J. Bacteriol.">
        <title>The Bacillus anthracis SleL (YaaH) protein is an N-acetylglucosaminidase involved in spore cortex depolymerization.</title>
        <authorList>
            <person name="Lambert E.A."/>
            <person name="Popham D.L."/>
        </authorList>
    </citation>
    <scope>FUNCTION</scope>
    <scope>INDUCTION</scope>
    <scope>DISRUPTION PHENOTYPE</scope>
    <source>
        <strain>Sterne</strain>
    </source>
</reference>
<reference key="3">
    <citation type="journal article" date="2012" name="Microbiology">
        <title>In vitro and in vivo analyses of the Bacillus anthracis spore cortex lytic protein SleL.</title>
        <authorList>
            <person name="Lambert E.A."/>
            <person name="Sherry N."/>
            <person name="Popham D.L."/>
        </authorList>
    </citation>
    <scope>FUNCTION</scope>
    <scope>SUBCELLULAR LOCATION</scope>
    <scope>DOMAIN</scope>
    <source>
        <strain>Sterne</strain>
    </source>
</reference>
<gene>
    <name evidence="6" type="primary">sleL</name>
    <name evidence="8" type="ordered locus">BAS3402</name>
</gene>
<sequence>MIQIVTVRSGDSVYSLASKYGSTPDEIVKDNGLNPAETLVVGQALIVNTKGNNYYVQPGDSLYRISQTYNVPLASLAKVNNLSLKSILHVGQQLYIPKGTKRAVESIAYLQPSTIPIKESLVNATRAINPFLTYLAYFSFEAKRDGTLKEPTETAKIANIATQGNTIPMLVITNIENGNFSADLTSVILRDATIQNKFITNILQTAEKYGMRDIHFDFESVAPEDREAYNRFLRNVKTRLPSGYTLSTTLVPKTSSNQKGKFFETHDYKAQGQIVDFVVIMTYDWGWQGGPPMAISPIGPVKEVLQYAKSQMPPQKIMMGQNLYGFDWKLPFKEGNPPAKAISSVAAVALARKYNVPIRYDFTAQAPHFNYFDENGVQHEVWFEDSRSVQSKFNLMKEQGIGGISYWKIGLPFPQNWRLLVENFTITKKG</sequence>
<organism>
    <name type="scientific">Bacillus anthracis</name>
    <dbReference type="NCBI Taxonomy" id="1392"/>
    <lineage>
        <taxon>Bacteria</taxon>
        <taxon>Bacillati</taxon>
        <taxon>Bacillota</taxon>
        <taxon>Bacilli</taxon>
        <taxon>Bacillales</taxon>
        <taxon>Bacillaceae</taxon>
        <taxon>Bacillus</taxon>
        <taxon>Bacillus cereus group</taxon>
    </lineage>
</organism>
<keyword id="KW-0309">Germination</keyword>
<keyword id="KW-0326">Glycosidase</keyword>
<keyword id="KW-0378">Hydrolase</keyword>
<keyword id="KW-0677">Repeat</keyword>
<accession>P0DPJ9</accession>
<dbReference type="EC" id="3.2.1.-" evidence="4 5"/>
<dbReference type="EMBL" id="AE017225">
    <property type="protein sequence ID" value="AAT55709.1"/>
    <property type="molecule type" value="Genomic_DNA"/>
</dbReference>
<dbReference type="RefSeq" id="WP_000614841.1">
    <property type="nucleotide sequence ID" value="NZ_WXXJ01000029.1"/>
</dbReference>
<dbReference type="RefSeq" id="YP_029658.1">
    <property type="nucleotide sequence ID" value="NC_005945.1"/>
</dbReference>
<dbReference type="SMR" id="P0DPJ9"/>
<dbReference type="STRING" id="261594.GBAA_3668"/>
<dbReference type="KEGG" id="bat:BAS3402"/>
<dbReference type="OMA" id="RWYEAHD"/>
<dbReference type="OrthoDB" id="9769314at2"/>
<dbReference type="GO" id="GO:0012505">
    <property type="term" value="C:endomembrane system"/>
    <property type="evidence" value="ECO:0007669"/>
    <property type="project" value="TreeGrafter"/>
</dbReference>
<dbReference type="GO" id="GO:0042763">
    <property type="term" value="C:intracellular immature spore"/>
    <property type="evidence" value="ECO:0007669"/>
    <property type="project" value="UniProtKB-SubCell"/>
</dbReference>
<dbReference type="GO" id="GO:0008061">
    <property type="term" value="F:chitin binding"/>
    <property type="evidence" value="ECO:0007669"/>
    <property type="project" value="InterPro"/>
</dbReference>
<dbReference type="GO" id="GO:0016798">
    <property type="term" value="F:hydrolase activity, acting on glycosyl bonds"/>
    <property type="evidence" value="ECO:0007669"/>
    <property type="project" value="UniProtKB-KW"/>
</dbReference>
<dbReference type="GO" id="GO:0070492">
    <property type="term" value="F:oligosaccharide binding"/>
    <property type="evidence" value="ECO:0007669"/>
    <property type="project" value="TreeGrafter"/>
</dbReference>
<dbReference type="GO" id="GO:0005975">
    <property type="term" value="P:carbohydrate metabolic process"/>
    <property type="evidence" value="ECO:0007669"/>
    <property type="project" value="InterPro"/>
</dbReference>
<dbReference type="CDD" id="cd02874">
    <property type="entry name" value="GH18_CFLE_spore_hydrolase"/>
    <property type="match status" value="1"/>
</dbReference>
<dbReference type="CDD" id="cd00118">
    <property type="entry name" value="LysM"/>
    <property type="match status" value="2"/>
</dbReference>
<dbReference type="Gene3D" id="3.10.50.10">
    <property type="match status" value="1"/>
</dbReference>
<dbReference type="Gene3D" id="3.20.20.80">
    <property type="entry name" value="Glycosidases"/>
    <property type="match status" value="1"/>
</dbReference>
<dbReference type="Gene3D" id="3.10.350.10">
    <property type="entry name" value="LysM domain"/>
    <property type="match status" value="2"/>
</dbReference>
<dbReference type="InterPro" id="IPR041704">
    <property type="entry name" value="CFLE_GH18"/>
</dbReference>
<dbReference type="InterPro" id="IPR011583">
    <property type="entry name" value="Chitinase_II/V-like_cat"/>
</dbReference>
<dbReference type="InterPro" id="IPR029070">
    <property type="entry name" value="Chitinase_insertion_sf"/>
</dbReference>
<dbReference type="InterPro" id="IPR001223">
    <property type="entry name" value="Glyco_hydro18_cat"/>
</dbReference>
<dbReference type="InterPro" id="IPR017853">
    <property type="entry name" value="Glycoside_hydrolase_SF"/>
</dbReference>
<dbReference type="InterPro" id="IPR018392">
    <property type="entry name" value="LysM_dom"/>
</dbReference>
<dbReference type="InterPro" id="IPR036779">
    <property type="entry name" value="LysM_dom_sf"/>
</dbReference>
<dbReference type="PANTHER" id="PTHR46066:SF2">
    <property type="entry name" value="CHITINASE DOMAIN-CONTAINING PROTEIN 1"/>
    <property type="match status" value="1"/>
</dbReference>
<dbReference type="PANTHER" id="PTHR46066">
    <property type="entry name" value="CHITINASE DOMAIN-CONTAINING PROTEIN 1 FAMILY MEMBER"/>
    <property type="match status" value="1"/>
</dbReference>
<dbReference type="Pfam" id="PF00704">
    <property type="entry name" value="Glyco_hydro_18"/>
    <property type="match status" value="1"/>
</dbReference>
<dbReference type="Pfam" id="PF01476">
    <property type="entry name" value="LysM"/>
    <property type="match status" value="2"/>
</dbReference>
<dbReference type="SMART" id="SM00636">
    <property type="entry name" value="Glyco_18"/>
    <property type="match status" value="1"/>
</dbReference>
<dbReference type="SMART" id="SM00257">
    <property type="entry name" value="LysM"/>
    <property type="match status" value="2"/>
</dbReference>
<dbReference type="SUPFAM" id="SSF51445">
    <property type="entry name" value="(Trans)glycosidases"/>
    <property type="match status" value="1"/>
</dbReference>
<dbReference type="SUPFAM" id="SSF54106">
    <property type="entry name" value="LysM domain"/>
    <property type="match status" value="2"/>
</dbReference>
<dbReference type="PROSITE" id="PS51910">
    <property type="entry name" value="GH18_2"/>
    <property type="match status" value="1"/>
</dbReference>
<dbReference type="PROSITE" id="PS51782">
    <property type="entry name" value="LYSM"/>
    <property type="match status" value="2"/>
</dbReference>
<proteinExistence type="evidence at transcript level"/>
<feature type="chain" id="PRO_0000444791" description="Cortical fragment-lytic enzyme">
    <location>
        <begin position="1"/>
        <end position="430"/>
    </location>
</feature>
<feature type="domain" description="LysM 1" evidence="2">
    <location>
        <begin position="3"/>
        <end position="47"/>
    </location>
</feature>
<feature type="domain" description="LysM 2" evidence="2">
    <location>
        <begin position="52"/>
        <end position="96"/>
    </location>
</feature>
<feature type="domain" description="GH18" evidence="3">
    <location>
        <begin position="104"/>
        <end position="430"/>
    </location>
</feature>
<feature type="active site" description="Proton donor" evidence="3">
    <location>
        <position position="219"/>
    </location>
</feature>
<comment type="function">
    <text evidence="4 5">N-acetylglucosaminidase involved in cortex peptidoglycan degradation during germination (PubMed:18835992, PubMed:22343356). Cleaves only partially degraded spore peptidoglycans. Recognizes muramic acid delta-lactam residues specific to spore peptidoglycans (PubMed:22343356).</text>
</comment>
<comment type="subcellular location">
    <subcellularLocation>
        <location evidence="5">Forespore</location>
    </subcellularLocation>
    <text evidence="5">Localizes to the coat or cortex of the endospore.</text>
</comment>
<comment type="induction">
    <text evidence="4">Expressed during sporulation.</text>
</comment>
<comment type="domain">
    <text evidence="5">The LysM domains are involved in substrate recognition and binding to cortical peptidoglycans. They are also involved in directing protein localization.</text>
</comment>
<comment type="disruption phenotype">
    <text evidence="4">The inactivation of the gene does not affect vegetative growth, spore viability, or the initial stages of germination, including dipicolinic acid release. However, germination of mutant spores is slightly delayed and mutants retain more diaminopimelic acid and N-acetylmuramic acid during germination than wild-type spores.</text>
</comment>
<comment type="similarity">
    <text evidence="7">Belongs to the glycosyl hydrolase 18 family. Chitinase class II subfamily.</text>
</comment>